<accession>Q8MMJ7</accession>
<sequence>MKTQFAILLVALVLFQMFAQSDAILGKIWEGIKSLFGKRGLSDLDGLDELFDGEISKADRDFLRELMR</sequence>
<organism>
    <name type="scientific">Opisthacanthus madagascariensis</name>
    <name type="common">Scorpion</name>
    <dbReference type="NCBI Taxonomy" id="167108"/>
    <lineage>
        <taxon>Eukaryota</taxon>
        <taxon>Metazoa</taxon>
        <taxon>Ecdysozoa</taxon>
        <taxon>Arthropoda</taxon>
        <taxon>Chelicerata</taxon>
        <taxon>Arachnida</taxon>
        <taxon>Scorpiones</taxon>
        <taxon>Iurida</taxon>
        <taxon>Scorpionoidea</taxon>
        <taxon>Hemiscorpiidae</taxon>
        <taxon>Opisthacanthus</taxon>
    </lineage>
</organism>
<dbReference type="EMBL" id="AF397895">
    <property type="protein sequence ID" value="AAM76913.1"/>
    <property type="molecule type" value="mRNA"/>
</dbReference>
<dbReference type="PDB" id="1T51">
    <property type="method" value="NMR"/>
    <property type="chains" value="A=24-36"/>
</dbReference>
<dbReference type="PDB" id="1T52">
    <property type="method" value="NMR"/>
    <property type="chains" value="A=24-36"/>
</dbReference>
<dbReference type="PDB" id="1T54">
    <property type="method" value="NMR"/>
    <property type="chains" value="A=24-36"/>
</dbReference>
<dbReference type="PDB" id="1T55">
    <property type="method" value="NMR"/>
    <property type="chains" value="A=24-36"/>
</dbReference>
<dbReference type="PDBsum" id="1T51"/>
<dbReference type="PDBsum" id="1T52"/>
<dbReference type="PDBsum" id="1T54"/>
<dbReference type="PDBsum" id="1T55"/>
<dbReference type="BMRB" id="Q8MMJ7"/>
<dbReference type="SMR" id="Q8MMJ7"/>
<dbReference type="EvolutionaryTrace" id="Q8MMJ7"/>
<dbReference type="GO" id="GO:0005576">
    <property type="term" value="C:extracellular region"/>
    <property type="evidence" value="ECO:0007669"/>
    <property type="project" value="UniProtKB-SubCell"/>
</dbReference>
<dbReference type="GO" id="GO:0016020">
    <property type="term" value="C:membrane"/>
    <property type="evidence" value="ECO:0007669"/>
    <property type="project" value="UniProtKB-KW"/>
</dbReference>
<dbReference type="GO" id="GO:0044218">
    <property type="term" value="C:other organism cell membrane"/>
    <property type="evidence" value="ECO:0007669"/>
    <property type="project" value="UniProtKB-KW"/>
</dbReference>
<dbReference type="GO" id="GO:0090729">
    <property type="term" value="F:toxin activity"/>
    <property type="evidence" value="ECO:0007669"/>
    <property type="project" value="UniProtKB-KW"/>
</dbReference>
<dbReference type="GO" id="GO:0042742">
    <property type="term" value="P:defense response to bacterium"/>
    <property type="evidence" value="ECO:0007669"/>
    <property type="project" value="UniProtKB-KW"/>
</dbReference>
<dbReference type="GO" id="GO:0031640">
    <property type="term" value="P:killing of cells of another organism"/>
    <property type="evidence" value="ECO:0007669"/>
    <property type="project" value="UniProtKB-KW"/>
</dbReference>
<dbReference type="GO" id="GO:0006811">
    <property type="term" value="P:monoatomic ion transport"/>
    <property type="evidence" value="ECO:0007669"/>
    <property type="project" value="UniProtKB-KW"/>
</dbReference>
<reference key="1">
    <citation type="journal article" date="2002" name="Biochem. Biophys. Res. Commun.">
        <title>Purification, structure-function analysis, and molecular characterization of novel linear peptides from scorpion Opisthacanthus madagascariensis.</title>
        <authorList>
            <person name="Dai L."/>
            <person name="Corzo G."/>
            <person name="Naoki H."/>
            <person name="Andriantsiferana M."/>
            <person name="Nakajima T."/>
        </authorList>
    </citation>
    <scope>NUCLEOTIDE SEQUENCE [MRNA]</scope>
    <scope>PROTEIN SEQUENCE OF 24-34</scope>
    <scope>MASS SPECTROMETRY</scope>
    <scope>SYNTHESIS</scope>
    <scope>SUBCELLULAR LOCATION</scope>
    <source>
        <tissue>Venom</tissue>
        <tissue>Venom gland</tissue>
    </source>
</reference>
<reference key="2">
    <citation type="journal article" date="2001" name="Biochem. Biophys. Res. Commun.">
        <title>IsCT, a novel cytotoxic linear peptide from scorpion Opisthacanthus madagascariensis.</title>
        <authorList>
            <person name="Dai L."/>
            <person name="Yasuda A."/>
            <person name="Naoki H."/>
            <person name="Corzo G."/>
            <person name="Andriantsiferana M."/>
            <person name="Nakajima T."/>
        </authorList>
    </citation>
    <scope>PROTEIN SEQUENCE OF 24-36</scope>
    <scope>MASS SPECTROMETRY</scope>
    <scope>SYNTHESIS</scope>
    <scope>SUBCELLULAR LOCATION</scope>
    <scope>AMIDATION AT PHE-36</scope>
    <source>
        <tissue>Venom</tissue>
    </source>
</reference>
<reference key="3">
    <citation type="journal article" date="2005" name="IUBMB Life">
        <title>Scorpion venom peptides without disulfide bridges.</title>
        <authorList>
            <person name="Zeng X.C."/>
            <person name="Corzo G."/>
            <person name="Hahin R."/>
        </authorList>
    </citation>
    <scope>NOMENCLATURE</scope>
</reference>
<reference key="4">
    <citation type="journal article" date="2014" name="Peptides">
        <title>Scorpion venom peptides with no disulfide bridges: a review.</title>
        <authorList>
            <person name="Almaaytah A."/>
            <person name="Albalas Q."/>
        </authorList>
    </citation>
    <scope>NOMENCLATURE</scope>
</reference>
<reference key="5">
    <citation type="journal article" date="2004" name="Biochem. Biophys. Res. Commun.">
        <title>Antibiotic activity and structural analysis of the scorpion-derived antimicrobial peptide IsCT and its analogs.</title>
        <authorList>
            <person name="Lee K."/>
            <person name="Shin S.Y."/>
            <person name="Kim K."/>
            <person name="Lim S.S."/>
            <person name="Hahm K.-S."/>
            <person name="Kim Y."/>
        </authorList>
    </citation>
    <scope>STRUCTURE BY NMR OF 24-36</scope>
    <scope>MUTAGENESIS OF TRP-29; GLU-30; GLY-31 AND SER-34</scope>
</reference>
<protein>
    <recommendedName>
        <fullName evidence="4">Cytotoxic linear peptide IsCT</fullName>
    </recommendedName>
    <alternativeName>
        <fullName evidence="8">IsCT1</fullName>
    </alternativeName>
    <alternativeName>
        <fullName evidence="7">Non-disulfide-bridged peptide 4.1</fullName>
        <shortName evidence="7">NDBP-4.1</shortName>
    </alternativeName>
    <alternativeName>
        <fullName evidence="6">Non-disulfide-bridged peptide 5.2</fullName>
        <shortName evidence="6">NDBP-5.2</shortName>
    </alternativeName>
    <component>
        <recommendedName>
            <fullName evidence="5">Cytotoxic linear peptide IsCTf</fullName>
        </recommendedName>
    </component>
</protein>
<comment type="function">
    <molecule>Cytotoxic linear peptide IsCT</molecule>
    <text evidence="1">Shows weak hemolytic activity and antibacterial activity against both Gram-positive and Gram-negative bacteria probably by forming pores in the cell membrane. IsCT adopts an amphipathic alpha-helical structure.</text>
</comment>
<comment type="function">
    <molecule>Cytotoxic linear peptide IsCTf</molecule>
    <text evidence="2">Shows neither hemolytic, nor antibacterial activities, probably because it cannot adopt amphipathic alpha-helical structure.</text>
</comment>
<comment type="subcellular location">
    <subcellularLocation>
        <location evidence="1 2">Secreted</location>
    </subcellularLocation>
    <subcellularLocation>
        <location>Target cell membrane</location>
    </subcellularLocation>
    <text>Forms a helical membrane channel in the prey.</text>
</comment>
<comment type="tissue specificity">
    <text evidence="9 10">Expressed by the venom gland.</text>
</comment>
<comment type="PTM">
    <text evidence="10">IsCTf is an enzymatic proteolytic cleavage product of IsCT by the proteases present in the venom.</text>
</comment>
<comment type="mass spectrometry">
    <molecule>Cytotoxic linear peptide IsCT</molecule>
</comment>
<comment type="mass spectrometry">
    <molecule>Cytotoxic linear peptide IsCT</molecule>
</comment>
<comment type="mass spectrometry">
    <molecule>Cytotoxic linear peptide IsCTf</molecule>
</comment>
<comment type="similarity">
    <text evidence="8">Belongs to the non-disulfide-bridged peptide (NDBP) superfamily. Short antimicrobial peptide (group 4) family.</text>
</comment>
<evidence type="ECO:0000269" key="1">
    <source>
    </source>
</evidence>
<evidence type="ECO:0000269" key="2">
    <source>
    </source>
</evidence>
<evidence type="ECO:0000269" key="3">
    <source>
    </source>
</evidence>
<evidence type="ECO:0000303" key="4">
    <source>
    </source>
</evidence>
<evidence type="ECO:0000303" key="5">
    <source>
    </source>
</evidence>
<evidence type="ECO:0000303" key="6">
    <source>
    </source>
</evidence>
<evidence type="ECO:0000303" key="7">
    <source>
    </source>
</evidence>
<evidence type="ECO:0000305" key="8"/>
<evidence type="ECO:0000305" key="9">
    <source>
    </source>
</evidence>
<evidence type="ECO:0000305" key="10">
    <source>
    </source>
</evidence>
<evidence type="ECO:0007829" key="11">
    <source>
        <dbReference type="PDB" id="1T51"/>
    </source>
</evidence>
<proteinExistence type="evidence at protein level"/>
<feature type="signal peptide" evidence="1 2">
    <location>
        <begin position="1"/>
        <end position="23"/>
    </location>
</feature>
<feature type="peptide" id="PRO_0000035356" description="Cytotoxic linear peptide IsCT" evidence="1">
    <location>
        <begin position="24"/>
        <end position="36"/>
    </location>
</feature>
<feature type="peptide" id="PRO_0000035357" description="Cytotoxic linear peptide IsCTf" evidence="2">
    <location>
        <begin position="24"/>
        <end position="34"/>
    </location>
</feature>
<feature type="propeptide" id="PRO_0000035358" evidence="8">
    <location>
        <begin position="40"/>
        <end position="68"/>
    </location>
</feature>
<feature type="site" description="Important for antibacterial activity, and hemolysis activity">
    <location>
        <position position="29"/>
    </location>
</feature>
<feature type="modified residue" description="Phenylalanine amide" evidence="1">
    <location>
        <position position="36"/>
    </location>
</feature>
<feature type="mutagenesis site" description="Drastic reduction in antibacterial activity against both Gram-positive and Gram-negative bacteria, and complete loss of hemolysis activity." evidence="3">
    <original>W</original>
    <variation>A</variation>
    <location>
        <position position="29"/>
    </location>
</feature>
<feature type="mutagenesis site" description="Drastic reduction in antibacterial activity against both Gram-positive and Gram-negative bacteria, and big loss of hemolysis activity. Similar or 2-fold increase in antibacterial activity against both Gram-positive and Gram-negative bacteria, and big loss of hemolysis activity; when associated with K-34." evidence="3">
    <original>W</original>
    <variation>L</variation>
    <location>
        <position position="29"/>
    </location>
</feature>
<feature type="mutagenesis site" description="Similar or 2-fold increase in antibacterial activity against both Gram-positive and Gram-negative bacteria, and little loss of hemolysis activity. Similar or 2-fold increase in antibacterial activity against both Gram-positive and Gram-negative bacteria, and complete loss of hemolysis activity; when associated with P-31 and K-34." evidence="3">
    <original>E</original>
    <variation>K</variation>
    <location>
        <position position="30"/>
    </location>
</feature>
<feature type="mutagenesis site" description="Similar or 2-fold increase in antibacterial activity against both Gram-positive and Gram-negative bacteria, and complete loss of hemolysis activity; when associated with K-30 and K-34." evidence="3">
    <original>G</original>
    <variation>P</variation>
    <location>
        <position position="31"/>
    </location>
</feature>
<feature type="mutagenesis site" description="Similar or 2-fold increase in antibacterial activity against both Gram-positive and Gram-negative bacteria, and big loss of hemolysis activity; when associated with L-29. Similar or 2-fold increase in antibacterial activity against both Gram-positive and Gram-negative bacteria, and complete loss of hemolysis; when associated with K-30 and P-31." evidence="3">
    <original>S</original>
    <variation>K</variation>
    <location>
        <position position="34"/>
    </location>
</feature>
<feature type="helix" evidence="11">
    <location>
        <begin position="27"/>
        <end position="35"/>
    </location>
</feature>
<keyword id="KW-0002">3D-structure</keyword>
<keyword id="KW-0027">Amidation</keyword>
<keyword id="KW-0044">Antibiotic</keyword>
<keyword id="KW-0929">Antimicrobial</keyword>
<keyword id="KW-0165">Cleavage on pair of basic residues</keyword>
<keyword id="KW-0204">Cytolysis</keyword>
<keyword id="KW-0903">Direct protein sequencing</keyword>
<keyword id="KW-0406">Ion transport</keyword>
<keyword id="KW-0472">Membrane</keyword>
<keyword id="KW-0964">Secreted</keyword>
<keyword id="KW-0732">Signal</keyword>
<keyword id="KW-1052">Target cell membrane</keyword>
<keyword id="KW-1053">Target membrane</keyword>
<keyword id="KW-0800">Toxin</keyword>
<keyword id="KW-0812">Transmembrane</keyword>
<keyword id="KW-0813">Transport</keyword>
<name>NDB41_OPIMA</name>